<dbReference type="EMBL" id="CP000492">
    <property type="protein sequence ID" value="ABL66389.1"/>
    <property type="molecule type" value="Genomic_DNA"/>
</dbReference>
<dbReference type="RefSeq" id="WP_011746171.1">
    <property type="nucleotide sequence ID" value="NC_008639.1"/>
</dbReference>
<dbReference type="SMR" id="A1BJ12"/>
<dbReference type="STRING" id="290317.Cpha266_2401"/>
<dbReference type="KEGG" id="cph:Cpha266_2401"/>
<dbReference type="eggNOG" id="COG0361">
    <property type="taxonomic scope" value="Bacteria"/>
</dbReference>
<dbReference type="HOGENOM" id="CLU_151267_1_0_10"/>
<dbReference type="OrthoDB" id="9803250at2"/>
<dbReference type="Proteomes" id="UP000008701">
    <property type="component" value="Chromosome"/>
</dbReference>
<dbReference type="GO" id="GO:0005829">
    <property type="term" value="C:cytosol"/>
    <property type="evidence" value="ECO:0007669"/>
    <property type="project" value="TreeGrafter"/>
</dbReference>
<dbReference type="GO" id="GO:0043022">
    <property type="term" value="F:ribosome binding"/>
    <property type="evidence" value="ECO:0007669"/>
    <property type="project" value="UniProtKB-UniRule"/>
</dbReference>
<dbReference type="GO" id="GO:0019843">
    <property type="term" value="F:rRNA binding"/>
    <property type="evidence" value="ECO:0007669"/>
    <property type="project" value="UniProtKB-UniRule"/>
</dbReference>
<dbReference type="GO" id="GO:0003743">
    <property type="term" value="F:translation initiation factor activity"/>
    <property type="evidence" value="ECO:0007669"/>
    <property type="project" value="UniProtKB-UniRule"/>
</dbReference>
<dbReference type="CDD" id="cd04451">
    <property type="entry name" value="S1_IF1"/>
    <property type="match status" value="1"/>
</dbReference>
<dbReference type="FunFam" id="2.40.50.140:FF:000002">
    <property type="entry name" value="Translation initiation factor IF-1"/>
    <property type="match status" value="1"/>
</dbReference>
<dbReference type="Gene3D" id="2.40.50.140">
    <property type="entry name" value="Nucleic acid-binding proteins"/>
    <property type="match status" value="1"/>
</dbReference>
<dbReference type="HAMAP" id="MF_00075">
    <property type="entry name" value="IF_1"/>
    <property type="match status" value="1"/>
</dbReference>
<dbReference type="InterPro" id="IPR012340">
    <property type="entry name" value="NA-bd_OB-fold"/>
</dbReference>
<dbReference type="InterPro" id="IPR006196">
    <property type="entry name" value="RNA-binding_domain_S1_IF1"/>
</dbReference>
<dbReference type="InterPro" id="IPR003029">
    <property type="entry name" value="S1_domain"/>
</dbReference>
<dbReference type="InterPro" id="IPR004368">
    <property type="entry name" value="TIF_IF1"/>
</dbReference>
<dbReference type="NCBIfam" id="TIGR00008">
    <property type="entry name" value="infA"/>
    <property type="match status" value="1"/>
</dbReference>
<dbReference type="PANTHER" id="PTHR33370">
    <property type="entry name" value="TRANSLATION INITIATION FACTOR IF-1, CHLOROPLASTIC"/>
    <property type="match status" value="1"/>
</dbReference>
<dbReference type="PANTHER" id="PTHR33370:SF1">
    <property type="entry name" value="TRANSLATION INITIATION FACTOR IF-1, CHLOROPLASTIC"/>
    <property type="match status" value="1"/>
</dbReference>
<dbReference type="Pfam" id="PF01176">
    <property type="entry name" value="eIF-1a"/>
    <property type="match status" value="1"/>
</dbReference>
<dbReference type="SMART" id="SM00316">
    <property type="entry name" value="S1"/>
    <property type="match status" value="1"/>
</dbReference>
<dbReference type="SUPFAM" id="SSF50249">
    <property type="entry name" value="Nucleic acid-binding proteins"/>
    <property type="match status" value="1"/>
</dbReference>
<dbReference type="PROSITE" id="PS50832">
    <property type="entry name" value="S1_IF1_TYPE"/>
    <property type="match status" value="1"/>
</dbReference>
<protein>
    <recommendedName>
        <fullName evidence="1">Translation initiation factor IF-1</fullName>
    </recommendedName>
</protein>
<name>IF1_CHLPD</name>
<feature type="chain" id="PRO_0000338797" description="Translation initiation factor IF-1">
    <location>
        <begin position="1"/>
        <end position="72"/>
    </location>
</feature>
<feature type="domain" description="S1-like" evidence="1">
    <location>
        <begin position="1"/>
        <end position="72"/>
    </location>
</feature>
<reference key="1">
    <citation type="submission" date="2006-12" db="EMBL/GenBank/DDBJ databases">
        <title>Complete sequence of Chlorobium phaeobacteroides DSM 266.</title>
        <authorList>
            <consortium name="US DOE Joint Genome Institute"/>
            <person name="Copeland A."/>
            <person name="Lucas S."/>
            <person name="Lapidus A."/>
            <person name="Barry K."/>
            <person name="Detter J.C."/>
            <person name="Glavina del Rio T."/>
            <person name="Hammon N."/>
            <person name="Israni S."/>
            <person name="Pitluck S."/>
            <person name="Goltsman E."/>
            <person name="Schmutz J."/>
            <person name="Larimer F."/>
            <person name="Land M."/>
            <person name="Hauser L."/>
            <person name="Mikhailova N."/>
            <person name="Li T."/>
            <person name="Overmann J."/>
            <person name="Bryant D.A."/>
            <person name="Richardson P."/>
        </authorList>
    </citation>
    <scope>NUCLEOTIDE SEQUENCE [LARGE SCALE GENOMIC DNA]</scope>
    <source>
        <strain>DSM 266 / SMG 266 / 2430</strain>
    </source>
</reference>
<comment type="function">
    <text evidence="1">One of the essential components for the initiation of protein synthesis. Stabilizes the binding of IF-2 and IF-3 on the 30S subunit to which N-formylmethionyl-tRNA(fMet) subsequently binds. Helps modulate mRNA selection, yielding the 30S pre-initiation complex (PIC). Upon addition of the 50S ribosomal subunit IF-1, IF-2 and IF-3 are released leaving the mature 70S translation initiation complex.</text>
</comment>
<comment type="subunit">
    <text evidence="1">Component of the 30S ribosomal translation pre-initiation complex which assembles on the 30S ribosome in the order IF-2 and IF-3, IF-1 and N-formylmethionyl-tRNA(fMet); mRNA recruitment can occur at any time during PIC assembly.</text>
</comment>
<comment type="subcellular location">
    <subcellularLocation>
        <location evidence="1">Cytoplasm</location>
    </subcellularLocation>
</comment>
<comment type="similarity">
    <text evidence="1">Belongs to the IF-1 family.</text>
</comment>
<evidence type="ECO:0000255" key="1">
    <source>
        <dbReference type="HAMAP-Rule" id="MF_00075"/>
    </source>
</evidence>
<accession>A1BJ12</accession>
<sequence length="72" mass="8184">MAKEEAIEIEGVILDALPNAQFKVKLENGLEVLAHVSGKIRMHYIRILAGDKVKVQISPYDITKGRITYRYK</sequence>
<keyword id="KW-0963">Cytoplasm</keyword>
<keyword id="KW-0396">Initiation factor</keyword>
<keyword id="KW-0648">Protein biosynthesis</keyword>
<keyword id="KW-1185">Reference proteome</keyword>
<keyword id="KW-0694">RNA-binding</keyword>
<keyword id="KW-0699">rRNA-binding</keyword>
<gene>
    <name evidence="1" type="primary">infA</name>
    <name type="ordered locus">Cpha266_2401</name>
</gene>
<proteinExistence type="inferred from homology"/>
<organism>
    <name type="scientific">Chlorobium phaeobacteroides (strain DSM 266 / SMG 266 / 2430)</name>
    <dbReference type="NCBI Taxonomy" id="290317"/>
    <lineage>
        <taxon>Bacteria</taxon>
        <taxon>Pseudomonadati</taxon>
        <taxon>Chlorobiota</taxon>
        <taxon>Chlorobiia</taxon>
        <taxon>Chlorobiales</taxon>
        <taxon>Chlorobiaceae</taxon>
        <taxon>Chlorobium/Pelodictyon group</taxon>
        <taxon>Chlorobium</taxon>
    </lineage>
</organism>